<feature type="chain" id="PRO_1000116500" description="Phospho-N-acetylmuramoyl-pentapeptide-transferase">
    <location>
        <begin position="1"/>
        <end position="372"/>
    </location>
</feature>
<feature type="transmembrane region" description="Helical" evidence="1">
    <location>
        <begin position="25"/>
        <end position="45"/>
    </location>
</feature>
<feature type="transmembrane region" description="Helical" evidence="1">
    <location>
        <begin position="73"/>
        <end position="93"/>
    </location>
</feature>
<feature type="transmembrane region" description="Helical" evidence="1">
    <location>
        <begin position="98"/>
        <end position="118"/>
    </location>
</feature>
<feature type="transmembrane region" description="Helical" evidence="1">
    <location>
        <begin position="134"/>
        <end position="154"/>
    </location>
</feature>
<feature type="transmembrane region" description="Helical" evidence="1">
    <location>
        <begin position="176"/>
        <end position="196"/>
    </location>
</feature>
<feature type="transmembrane region" description="Helical" evidence="1">
    <location>
        <begin position="211"/>
        <end position="231"/>
    </location>
</feature>
<feature type="transmembrane region" description="Helical" evidence="1">
    <location>
        <begin position="251"/>
        <end position="271"/>
    </location>
</feature>
<feature type="transmembrane region" description="Helical" evidence="1">
    <location>
        <begin position="275"/>
        <end position="295"/>
    </location>
</feature>
<feature type="transmembrane region" description="Helical" evidence="1">
    <location>
        <begin position="300"/>
        <end position="320"/>
    </location>
</feature>
<feature type="transmembrane region" description="Helical" evidence="1">
    <location>
        <begin position="349"/>
        <end position="369"/>
    </location>
</feature>
<organism>
    <name type="scientific">Acinetobacter baumannii (strain AB0057)</name>
    <dbReference type="NCBI Taxonomy" id="480119"/>
    <lineage>
        <taxon>Bacteria</taxon>
        <taxon>Pseudomonadati</taxon>
        <taxon>Pseudomonadota</taxon>
        <taxon>Gammaproteobacteria</taxon>
        <taxon>Moraxellales</taxon>
        <taxon>Moraxellaceae</taxon>
        <taxon>Acinetobacter</taxon>
        <taxon>Acinetobacter calcoaceticus/baumannii complex</taxon>
    </lineage>
</organism>
<proteinExistence type="inferred from homology"/>
<protein>
    <recommendedName>
        <fullName evidence="1">Phospho-N-acetylmuramoyl-pentapeptide-transferase</fullName>
        <ecNumber evidence="1">2.7.8.13</ecNumber>
    </recommendedName>
    <alternativeName>
        <fullName evidence="1">UDP-MurNAc-pentapeptide phosphotransferase</fullName>
    </alternativeName>
</protein>
<evidence type="ECO:0000255" key="1">
    <source>
        <dbReference type="HAMAP-Rule" id="MF_00038"/>
    </source>
</evidence>
<name>MRAY_ACIB5</name>
<comment type="function">
    <text evidence="1">Catalyzes the initial step of the lipid cycle reactions in the biosynthesis of the cell wall peptidoglycan: transfers peptidoglycan precursor phospho-MurNAc-pentapeptide from UDP-MurNAc-pentapeptide onto the lipid carrier undecaprenyl phosphate, yielding undecaprenyl-pyrophosphoryl-MurNAc-pentapeptide, known as lipid I.</text>
</comment>
<comment type="catalytic activity">
    <reaction evidence="1">
        <text>UDP-N-acetyl-alpha-D-muramoyl-L-alanyl-gamma-D-glutamyl-meso-2,6-diaminopimeloyl-D-alanyl-D-alanine + di-trans,octa-cis-undecaprenyl phosphate = di-trans,octa-cis-undecaprenyl diphospho-N-acetyl-alpha-D-muramoyl-L-alanyl-D-glutamyl-meso-2,6-diaminopimeloyl-D-alanyl-D-alanine + UMP</text>
        <dbReference type="Rhea" id="RHEA:28386"/>
        <dbReference type="ChEBI" id="CHEBI:57865"/>
        <dbReference type="ChEBI" id="CHEBI:60392"/>
        <dbReference type="ChEBI" id="CHEBI:61386"/>
        <dbReference type="ChEBI" id="CHEBI:61387"/>
        <dbReference type="EC" id="2.7.8.13"/>
    </reaction>
</comment>
<comment type="cofactor">
    <cofactor evidence="1">
        <name>Mg(2+)</name>
        <dbReference type="ChEBI" id="CHEBI:18420"/>
    </cofactor>
</comment>
<comment type="pathway">
    <text evidence="1">Cell wall biogenesis; peptidoglycan biosynthesis.</text>
</comment>
<comment type="subcellular location">
    <subcellularLocation>
        <location evidence="1">Cell inner membrane</location>
        <topology evidence="1">Multi-pass membrane protein</topology>
    </subcellularLocation>
</comment>
<comment type="similarity">
    <text evidence="1">Belongs to the glycosyltransferase 4 family. MraY subfamily.</text>
</comment>
<gene>
    <name evidence="1" type="primary">mraY</name>
    <name type="ordered locus">AB57_3652</name>
</gene>
<keyword id="KW-0131">Cell cycle</keyword>
<keyword id="KW-0132">Cell division</keyword>
<keyword id="KW-0997">Cell inner membrane</keyword>
<keyword id="KW-1003">Cell membrane</keyword>
<keyword id="KW-0133">Cell shape</keyword>
<keyword id="KW-0961">Cell wall biogenesis/degradation</keyword>
<keyword id="KW-0460">Magnesium</keyword>
<keyword id="KW-0472">Membrane</keyword>
<keyword id="KW-0479">Metal-binding</keyword>
<keyword id="KW-0573">Peptidoglycan synthesis</keyword>
<keyword id="KW-0808">Transferase</keyword>
<keyword id="KW-0812">Transmembrane</keyword>
<keyword id="KW-1133">Transmembrane helix</keyword>
<sequence length="372" mass="40915">MLLWLFEQLAGYHSSFQVVRYLTLRSLLSVLTSLTIGLVLGPIMIRKLQALKYGQAVSSFAPENHAKKMGTPTMGGILILLSIGISTLLWADLSNPYVWIVLGVMVVFGAVGWADDWIKIRYKDNAGLPARKKFFWTSVASLGAGIALYLIATQQSNAEYTANMLDLLIPFFKNLSIPLSIVPLGLAFIVFTYLVINGASNAVNLTDGLDGLAIMPVVMVATGLGVFAYLSGDIRFANYLHIPYVKYTSELVVICSAMIGAGLAFLWYNAHPAQVFMGDVGALALGAMLGTIAVMVRQEIVFAIMGGVFVMEAVSVFLQIGSLRMRNKRVFLMAPLHHHYEKQGWKETQVVIRFWIITIMLVVLGLMTLKLR</sequence>
<dbReference type="EC" id="2.7.8.13" evidence="1"/>
<dbReference type="EMBL" id="CP001182">
    <property type="protein sequence ID" value="ACJ43013.1"/>
    <property type="molecule type" value="Genomic_DNA"/>
</dbReference>
<dbReference type="RefSeq" id="WP_000928089.1">
    <property type="nucleotide sequence ID" value="NC_011586.2"/>
</dbReference>
<dbReference type="SMR" id="B7IAW6"/>
<dbReference type="GeneID" id="92895435"/>
<dbReference type="KEGG" id="abn:AB57_3652"/>
<dbReference type="HOGENOM" id="CLU_023982_0_0_6"/>
<dbReference type="UniPathway" id="UPA00219"/>
<dbReference type="Proteomes" id="UP000007094">
    <property type="component" value="Chromosome"/>
</dbReference>
<dbReference type="GO" id="GO:0005886">
    <property type="term" value="C:plasma membrane"/>
    <property type="evidence" value="ECO:0007669"/>
    <property type="project" value="UniProtKB-SubCell"/>
</dbReference>
<dbReference type="GO" id="GO:0046872">
    <property type="term" value="F:metal ion binding"/>
    <property type="evidence" value="ECO:0007669"/>
    <property type="project" value="UniProtKB-KW"/>
</dbReference>
<dbReference type="GO" id="GO:0008963">
    <property type="term" value="F:phospho-N-acetylmuramoyl-pentapeptide-transferase activity"/>
    <property type="evidence" value="ECO:0007669"/>
    <property type="project" value="UniProtKB-UniRule"/>
</dbReference>
<dbReference type="GO" id="GO:0051992">
    <property type="term" value="F:UDP-N-acetylmuramoyl-L-alanyl-D-glutamyl-meso-2,6-diaminopimelyl-D-alanyl-D-alanine:undecaprenyl-phosphate transferase activity"/>
    <property type="evidence" value="ECO:0007669"/>
    <property type="project" value="RHEA"/>
</dbReference>
<dbReference type="GO" id="GO:0051301">
    <property type="term" value="P:cell division"/>
    <property type="evidence" value="ECO:0007669"/>
    <property type="project" value="UniProtKB-KW"/>
</dbReference>
<dbReference type="GO" id="GO:0071555">
    <property type="term" value="P:cell wall organization"/>
    <property type="evidence" value="ECO:0007669"/>
    <property type="project" value="UniProtKB-KW"/>
</dbReference>
<dbReference type="GO" id="GO:0009252">
    <property type="term" value="P:peptidoglycan biosynthetic process"/>
    <property type="evidence" value="ECO:0007669"/>
    <property type="project" value="UniProtKB-UniRule"/>
</dbReference>
<dbReference type="GO" id="GO:0008360">
    <property type="term" value="P:regulation of cell shape"/>
    <property type="evidence" value="ECO:0007669"/>
    <property type="project" value="UniProtKB-KW"/>
</dbReference>
<dbReference type="CDD" id="cd06852">
    <property type="entry name" value="GT_MraY"/>
    <property type="match status" value="1"/>
</dbReference>
<dbReference type="HAMAP" id="MF_00038">
    <property type="entry name" value="MraY"/>
    <property type="match status" value="1"/>
</dbReference>
<dbReference type="InterPro" id="IPR000715">
    <property type="entry name" value="Glycosyl_transferase_4"/>
</dbReference>
<dbReference type="InterPro" id="IPR003524">
    <property type="entry name" value="PNAcMuramoyl-5peptid_Trfase"/>
</dbReference>
<dbReference type="InterPro" id="IPR018480">
    <property type="entry name" value="PNAcMuramoyl-5peptid_Trfase_CS"/>
</dbReference>
<dbReference type="NCBIfam" id="TIGR00445">
    <property type="entry name" value="mraY"/>
    <property type="match status" value="1"/>
</dbReference>
<dbReference type="PANTHER" id="PTHR22926">
    <property type="entry name" value="PHOSPHO-N-ACETYLMURAMOYL-PENTAPEPTIDE-TRANSFERASE"/>
    <property type="match status" value="1"/>
</dbReference>
<dbReference type="PANTHER" id="PTHR22926:SF5">
    <property type="entry name" value="PHOSPHO-N-ACETYLMURAMOYL-PENTAPEPTIDE-TRANSFERASE HOMOLOG"/>
    <property type="match status" value="1"/>
</dbReference>
<dbReference type="Pfam" id="PF00953">
    <property type="entry name" value="Glycos_transf_4"/>
    <property type="match status" value="1"/>
</dbReference>
<dbReference type="PROSITE" id="PS01347">
    <property type="entry name" value="MRAY_1"/>
    <property type="match status" value="1"/>
</dbReference>
<dbReference type="PROSITE" id="PS01348">
    <property type="entry name" value="MRAY_2"/>
    <property type="match status" value="1"/>
</dbReference>
<reference key="1">
    <citation type="journal article" date="2008" name="J. Bacteriol.">
        <title>Comparative genome sequence analysis of multidrug-resistant Acinetobacter baumannii.</title>
        <authorList>
            <person name="Adams M.D."/>
            <person name="Goglin K."/>
            <person name="Molyneaux N."/>
            <person name="Hujer K.M."/>
            <person name="Lavender H."/>
            <person name="Jamison J.J."/>
            <person name="MacDonald I.J."/>
            <person name="Martin K.M."/>
            <person name="Russo T."/>
            <person name="Campagnari A.A."/>
            <person name="Hujer A.M."/>
            <person name="Bonomo R.A."/>
            <person name="Gill S.R."/>
        </authorList>
    </citation>
    <scope>NUCLEOTIDE SEQUENCE [LARGE SCALE GENOMIC DNA]</scope>
    <source>
        <strain>AB0057</strain>
    </source>
</reference>
<accession>B7IAW6</accession>